<comment type="function">
    <text evidence="1">Catalyzes the oxidation of either pyridoxine 5'-phosphate (PNP) or pyridoxamine 5'-phosphate (PMP) into pyridoxal 5'-phosphate (PLP).</text>
</comment>
<comment type="catalytic activity">
    <reaction evidence="1">
        <text>pyridoxamine 5'-phosphate + O2 + H2O = pyridoxal 5'-phosphate + H2O2 + NH4(+)</text>
        <dbReference type="Rhea" id="RHEA:15817"/>
        <dbReference type="ChEBI" id="CHEBI:15377"/>
        <dbReference type="ChEBI" id="CHEBI:15379"/>
        <dbReference type="ChEBI" id="CHEBI:16240"/>
        <dbReference type="ChEBI" id="CHEBI:28938"/>
        <dbReference type="ChEBI" id="CHEBI:58451"/>
        <dbReference type="ChEBI" id="CHEBI:597326"/>
        <dbReference type="EC" id="1.4.3.5"/>
    </reaction>
</comment>
<comment type="catalytic activity">
    <reaction evidence="1">
        <text>pyridoxine 5'-phosphate + O2 = pyridoxal 5'-phosphate + H2O2</text>
        <dbReference type="Rhea" id="RHEA:15149"/>
        <dbReference type="ChEBI" id="CHEBI:15379"/>
        <dbReference type="ChEBI" id="CHEBI:16240"/>
        <dbReference type="ChEBI" id="CHEBI:58589"/>
        <dbReference type="ChEBI" id="CHEBI:597326"/>
        <dbReference type="EC" id="1.4.3.5"/>
    </reaction>
</comment>
<comment type="cofactor">
    <cofactor evidence="1">
        <name>FMN</name>
        <dbReference type="ChEBI" id="CHEBI:58210"/>
    </cofactor>
    <text evidence="1">Binds 1 FMN per subunit.</text>
</comment>
<comment type="pathway">
    <text evidence="1">Cofactor metabolism; pyridoxal 5'-phosphate salvage; pyridoxal 5'-phosphate from pyridoxamine 5'-phosphate: step 1/1.</text>
</comment>
<comment type="pathway">
    <text evidence="1">Cofactor metabolism; pyridoxal 5'-phosphate salvage; pyridoxal 5'-phosphate from pyridoxine 5'-phosphate: step 1/1.</text>
</comment>
<comment type="subunit">
    <text evidence="1">Homodimer.</text>
</comment>
<comment type="similarity">
    <text evidence="1">Belongs to the pyridoxamine 5'-phosphate oxidase family.</text>
</comment>
<name>PDXH_STUS1</name>
<protein>
    <recommendedName>
        <fullName evidence="1">Pyridoxine/pyridoxamine 5'-phosphate oxidase</fullName>
        <ecNumber evidence="1">1.4.3.5</ecNumber>
    </recommendedName>
    <alternativeName>
        <fullName evidence="1">PNP/PMP oxidase</fullName>
        <shortName evidence="1">PNPOx</shortName>
    </alternativeName>
    <alternativeName>
        <fullName evidence="1">Pyridoxal 5'-phosphate synthase</fullName>
    </alternativeName>
</protein>
<sequence>MIQTLADMRRDYTRDGLSEANAPDDPFGLFRQWFTEATQTEQAPVEPNAMSLATVDADGRPHCRILLLKALDDRGFTFFTNYDSAKGQQLDASPYAAMTFFWPTLERQVRIEGRVEKVTAEESDAYFQVRPLGSRLGAWASPQSQVIRDRAELERLLAETEQRFLDKAPHCPPHWGGYRLLPERIEFWQGRPSRLHDRLDYRLVANGWQRERLAP</sequence>
<organism>
    <name type="scientific">Stutzerimonas stutzeri (strain A1501)</name>
    <name type="common">Pseudomonas stutzeri</name>
    <dbReference type="NCBI Taxonomy" id="379731"/>
    <lineage>
        <taxon>Bacteria</taxon>
        <taxon>Pseudomonadati</taxon>
        <taxon>Pseudomonadota</taxon>
        <taxon>Gammaproteobacteria</taxon>
        <taxon>Pseudomonadales</taxon>
        <taxon>Pseudomonadaceae</taxon>
        <taxon>Stutzerimonas</taxon>
    </lineage>
</organism>
<proteinExistence type="inferred from homology"/>
<accession>A4VJR0</accession>
<dbReference type="EC" id="1.4.3.5" evidence="1"/>
<dbReference type="EMBL" id="CP000304">
    <property type="protein sequence ID" value="ABP79211.1"/>
    <property type="molecule type" value="Genomic_DNA"/>
</dbReference>
<dbReference type="RefSeq" id="WP_011912689.1">
    <property type="nucleotide sequence ID" value="NC_009434.1"/>
</dbReference>
<dbReference type="SMR" id="A4VJR0"/>
<dbReference type="KEGG" id="psa:PST_1526"/>
<dbReference type="eggNOG" id="COG0259">
    <property type="taxonomic scope" value="Bacteria"/>
</dbReference>
<dbReference type="HOGENOM" id="CLU_032263_2_2_6"/>
<dbReference type="UniPathway" id="UPA01068">
    <property type="reaction ID" value="UER00304"/>
</dbReference>
<dbReference type="UniPathway" id="UPA01068">
    <property type="reaction ID" value="UER00305"/>
</dbReference>
<dbReference type="Proteomes" id="UP000000233">
    <property type="component" value="Chromosome"/>
</dbReference>
<dbReference type="GO" id="GO:0010181">
    <property type="term" value="F:FMN binding"/>
    <property type="evidence" value="ECO:0007669"/>
    <property type="project" value="UniProtKB-UniRule"/>
</dbReference>
<dbReference type="GO" id="GO:0004733">
    <property type="term" value="F:pyridoxamine phosphate oxidase activity"/>
    <property type="evidence" value="ECO:0007669"/>
    <property type="project" value="UniProtKB-UniRule"/>
</dbReference>
<dbReference type="GO" id="GO:0008615">
    <property type="term" value="P:pyridoxine biosynthetic process"/>
    <property type="evidence" value="ECO:0007669"/>
    <property type="project" value="UniProtKB-KW"/>
</dbReference>
<dbReference type="FunFam" id="2.30.110.10:FF:000011">
    <property type="entry name" value="Chromosome 7, whole genome shotgun sequence"/>
    <property type="match status" value="1"/>
</dbReference>
<dbReference type="Gene3D" id="2.30.110.10">
    <property type="entry name" value="Electron Transport, Fmn-binding Protein, Chain A"/>
    <property type="match status" value="1"/>
</dbReference>
<dbReference type="HAMAP" id="MF_01629">
    <property type="entry name" value="PdxH"/>
    <property type="match status" value="1"/>
</dbReference>
<dbReference type="InterPro" id="IPR000659">
    <property type="entry name" value="Pyridox_Oxase"/>
</dbReference>
<dbReference type="InterPro" id="IPR019740">
    <property type="entry name" value="Pyridox_Oxase_CS"/>
</dbReference>
<dbReference type="InterPro" id="IPR011576">
    <property type="entry name" value="Pyridox_Oxase_N"/>
</dbReference>
<dbReference type="InterPro" id="IPR019576">
    <property type="entry name" value="Pyridoxamine_oxidase_dimer_C"/>
</dbReference>
<dbReference type="InterPro" id="IPR012349">
    <property type="entry name" value="Split_barrel_FMN-bd"/>
</dbReference>
<dbReference type="NCBIfam" id="TIGR00558">
    <property type="entry name" value="pdxH"/>
    <property type="match status" value="1"/>
</dbReference>
<dbReference type="NCBIfam" id="NF004231">
    <property type="entry name" value="PRK05679.1"/>
    <property type="match status" value="1"/>
</dbReference>
<dbReference type="PANTHER" id="PTHR10851:SF0">
    <property type="entry name" value="PYRIDOXINE-5'-PHOSPHATE OXIDASE"/>
    <property type="match status" value="1"/>
</dbReference>
<dbReference type="PANTHER" id="PTHR10851">
    <property type="entry name" value="PYRIDOXINE-5-PHOSPHATE OXIDASE"/>
    <property type="match status" value="1"/>
</dbReference>
<dbReference type="Pfam" id="PF10590">
    <property type="entry name" value="PNP_phzG_C"/>
    <property type="match status" value="1"/>
</dbReference>
<dbReference type="Pfam" id="PF01243">
    <property type="entry name" value="PNPOx_N"/>
    <property type="match status" value="1"/>
</dbReference>
<dbReference type="PIRSF" id="PIRSF000190">
    <property type="entry name" value="Pyd_amn-ph_oxd"/>
    <property type="match status" value="1"/>
</dbReference>
<dbReference type="SUPFAM" id="SSF50475">
    <property type="entry name" value="FMN-binding split barrel"/>
    <property type="match status" value="1"/>
</dbReference>
<dbReference type="PROSITE" id="PS01064">
    <property type="entry name" value="PYRIDOX_OXIDASE"/>
    <property type="match status" value="1"/>
</dbReference>
<keyword id="KW-0285">Flavoprotein</keyword>
<keyword id="KW-0288">FMN</keyword>
<keyword id="KW-0560">Oxidoreductase</keyword>
<keyword id="KW-0664">Pyridoxine biosynthesis</keyword>
<keyword id="KW-1185">Reference proteome</keyword>
<evidence type="ECO:0000255" key="1">
    <source>
        <dbReference type="HAMAP-Rule" id="MF_01629"/>
    </source>
</evidence>
<feature type="chain" id="PRO_1000069700" description="Pyridoxine/pyridoxamine 5'-phosphate oxidase">
    <location>
        <begin position="1"/>
        <end position="215"/>
    </location>
</feature>
<feature type="binding site" evidence="1">
    <location>
        <begin position="9"/>
        <end position="12"/>
    </location>
    <ligand>
        <name>substrate</name>
    </ligand>
</feature>
<feature type="binding site" evidence="1">
    <location>
        <begin position="64"/>
        <end position="69"/>
    </location>
    <ligand>
        <name>FMN</name>
        <dbReference type="ChEBI" id="CHEBI:58210"/>
    </ligand>
</feature>
<feature type="binding site" evidence="1">
    <location>
        <position position="69"/>
    </location>
    <ligand>
        <name>substrate</name>
    </ligand>
</feature>
<feature type="binding site" evidence="1">
    <location>
        <begin position="79"/>
        <end position="80"/>
    </location>
    <ligand>
        <name>FMN</name>
        <dbReference type="ChEBI" id="CHEBI:58210"/>
    </ligand>
</feature>
<feature type="binding site" evidence="1">
    <location>
        <position position="86"/>
    </location>
    <ligand>
        <name>FMN</name>
        <dbReference type="ChEBI" id="CHEBI:58210"/>
    </ligand>
</feature>
<feature type="binding site" evidence="1">
    <location>
        <position position="108"/>
    </location>
    <ligand>
        <name>FMN</name>
        <dbReference type="ChEBI" id="CHEBI:58210"/>
    </ligand>
</feature>
<feature type="binding site" evidence="1">
    <location>
        <position position="126"/>
    </location>
    <ligand>
        <name>substrate</name>
    </ligand>
</feature>
<feature type="binding site" evidence="1">
    <location>
        <position position="130"/>
    </location>
    <ligand>
        <name>substrate</name>
    </ligand>
</feature>
<feature type="binding site" evidence="1">
    <location>
        <position position="134"/>
    </location>
    <ligand>
        <name>substrate</name>
    </ligand>
</feature>
<feature type="binding site" evidence="1">
    <location>
        <begin position="143"/>
        <end position="144"/>
    </location>
    <ligand>
        <name>FMN</name>
        <dbReference type="ChEBI" id="CHEBI:58210"/>
    </ligand>
</feature>
<feature type="binding site" evidence="1">
    <location>
        <position position="188"/>
    </location>
    <ligand>
        <name>FMN</name>
        <dbReference type="ChEBI" id="CHEBI:58210"/>
    </ligand>
</feature>
<feature type="binding site" evidence="1">
    <location>
        <begin position="194"/>
        <end position="196"/>
    </location>
    <ligand>
        <name>substrate</name>
    </ligand>
</feature>
<feature type="binding site" evidence="1">
    <location>
        <position position="198"/>
    </location>
    <ligand>
        <name>FMN</name>
        <dbReference type="ChEBI" id="CHEBI:58210"/>
    </ligand>
</feature>
<gene>
    <name evidence="1" type="primary">pdxH</name>
    <name type="ordered locus">PST_1526</name>
</gene>
<reference key="1">
    <citation type="journal article" date="2008" name="Proc. Natl. Acad. Sci. U.S.A.">
        <title>Nitrogen fixation island and rhizosphere competence traits in the genome of root-associated Pseudomonas stutzeri A1501.</title>
        <authorList>
            <person name="Yan Y."/>
            <person name="Yang J."/>
            <person name="Dou Y."/>
            <person name="Chen M."/>
            <person name="Ping S."/>
            <person name="Peng J."/>
            <person name="Lu W."/>
            <person name="Zhang W."/>
            <person name="Yao Z."/>
            <person name="Li H."/>
            <person name="Liu W."/>
            <person name="He S."/>
            <person name="Geng L."/>
            <person name="Zhang X."/>
            <person name="Yang F."/>
            <person name="Yu H."/>
            <person name="Zhan Y."/>
            <person name="Li D."/>
            <person name="Lin Z."/>
            <person name="Wang Y."/>
            <person name="Elmerich C."/>
            <person name="Lin M."/>
            <person name="Jin Q."/>
        </authorList>
    </citation>
    <scope>NUCLEOTIDE SEQUENCE [LARGE SCALE GENOMIC DNA]</scope>
    <source>
        <strain>A1501</strain>
    </source>
</reference>